<accession>Q7MHH4</accession>
<gene>
    <name type="ordered locus">VV2897</name>
</gene>
<protein>
    <recommendedName>
        <fullName evidence="1">Carbohydrate deacetylase</fullName>
        <ecNumber evidence="1">3.5.1.-</ecNumber>
    </recommendedName>
</protein>
<reference key="1">
    <citation type="journal article" date="2003" name="Genome Res.">
        <title>Comparative genome analysis of Vibrio vulnificus, a marine pathogen.</title>
        <authorList>
            <person name="Chen C.-Y."/>
            <person name="Wu K.-M."/>
            <person name="Chang Y.-C."/>
            <person name="Chang C.-H."/>
            <person name="Tsai H.-C."/>
            <person name="Liao T.-L."/>
            <person name="Liu Y.-M."/>
            <person name="Chen H.-J."/>
            <person name="Shen A.B.-T."/>
            <person name="Li J.-C."/>
            <person name="Su T.-L."/>
            <person name="Shao C.-P."/>
            <person name="Lee C.-T."/>
            <person name="Hor L.-I."/>
            <person name="Tsai S.-F."/>
        </authorList>
    </citation>
    <scope>NUCLEOTIDE SEQUENCE [LARGE SCALE GENOMIC DNA]</scope>
    <source>
        <strain>YJ016</strain>
    </source>
</reference>
<evidence type="ECO:0000255" key="1">
    <source>
        <dbReference type="HAMAP-Rule" id="MF_01246"/>
    </source>
</evidence>
<evidence type="ECO:0000305" key="2"/>
<sequence length="252" mass="28480">MKVIFNADDFGLTRGVNDGIVHAHLDGVVRSTTMMVGMPAEAHAVELANHLPELKVGLHLRFTAGRPLTEGQNLVGRDGDFTPYGQFWHRRDYDPIAIHNEAVAQVEYFLALGLNLSHIDSHHHAHTHPQFEPVIYDIARTYQVPLRSTGLAGEEEFGCRYHFTDHFYDKRVGHDSLIQHLLTLKEHYDVVEVMCHPAILDTALEACSGYAKQRELELAILTSDELKLSLRKHDIEVTDYSELIFAPLHSCV</sequence>
<name>YDJC_VIBVY</name>
<dbReference type="EC" id="3.5.1.-" evidence="1"/>
<dbReference type="EMBL" id="BA000037">
    <property type="protein sequence ID" value="BAC95661.1"/>
    <property type="status" value="ALT_INIT"/>
    <property type="molecule type" value="Genomic_DNA"/>
</dbReference>
<dbReference type="RefSeq" id="WP_043877327.1">
    <property type="nucleotide sequence ID" value="NC_005139.1"/>
</dbReference>
<dbReference type="SMR" id="Q7MHH4"/>
<dbReference type="STRING" id="672.VV93_v1c26030"/>
<dbReference type="KEGG" id="vvy:VV2897"/>
<dbReference type="PATRIC" id="fig|196600.6.peg.2880"/>
<dbReference type="eggNOG" id="COG3394">
    <property type="taxonomic scope" value="Bacteria"/>
</dbReference>
<dbReference type="HOGENOM" id="CLU_064244_4_0_6"/>
<dbReference type="Proteomes" id="UP000002675">
    <property type="component" value="Chromosome I"/>
</dbReference>
<dbReference type="GO" id="GO:0019213">
    <property type="term" value="F:deacetylase activity"/>
    <property type="evidence" value="ECO:0007669"/>
    <property type="project" value="TreeGrafter"/>
</dbReference>
<dbReference type="GO" id="GO:0016811">
    <property type="term" value="F:hydrolase activity, acting on carbon-nitrogen (but not peptide) bonds, in linear amides"/>
    <property type="evidence" value="ECO:0007669"/>
    <property type="project" value="UniProtKB-UniRule"/>
</dbReference>
<dbReference type="GO" id="GO:0046872">
    <property type="term" value="F:metal ion binding"/>
    <property type="evidence" value="ECO:0007669"/>
    <property type="project" value="UniProtKB-KW"/>
</dbReference>
<dbReference type="GO" id="GO:0000272">
    <property type="term" value="P:polysaccharide catabolic process"/>
    <property type="evidence" value="ECO:0007669"/>
    <property type="project" value="InterPro"/>
</dbReference>
<dbReference type="CDD" id="cd10803">
    <property type="entry name" value="YdjC_EF3048_like"/>
    <property type="match status" value="1"/>
</dbReference>
<dbReference type="Gene3D" id="3.20.20.370">
    <property type="entry name" value="Glycoside hydrolase/deacetylase"/>
    <property type="match status" value="1"/>
</dbReference>
<dbReference type="HAMAP" id="MF_01246">
    <property type="entry name" value="COD"/>
    <property type="match status" value="1"/>
</dbReference>
<dbReference type="InterPro" id="IPR022948">
    <property type="entry name" value="COD_ChbG_bac"/>
</dbReference>
<dbReference type="InterPro" id="IPR011330">
    <property type="entry name" value="Glyco_hydro/deAcase_b/a-brl"/>
</dbReference>
<dbReference type="InterPro" id="IPR006879">
    <property type="entry name" value="YdjC-like"/>
</dbReference>
<dbReference type="NCBIfam" id="NF002559">
    <property type="entry name" value="PRK02134.1"/>
    <property type="match status" value="1"/>
</dbReference>
<dbReference type="PANTHER" id="PTHR31609:SF1">
    <property type="entry name" value="CARBOHYDRATE DEACETYLASE"/>
    <property type="match status" value="1"/>
</dbReference>
<dbReference type="PANTHER" id="PTHR31609">
    <property type="entry name" value="YDJC DEACETYLASE FAMILY MEMBER"/>
    <property type="match status" value="1"/>
</dbReference>
<dbReference type="Pfam" id="PF04794">
    <property type="entry name" value="YdjC"/>
    <property type="match status" value="1"/>
</dbReference>
<dbReference type="SUPFAM" id="SSF88713">
    <property type="entry name" value="Glycoside hydrolase/deacetylase"/>
    <property type="match status" value="1"/>
</dbReference>
<proteinExistence type="inferred from homology"/>
<feature type="chain" id="PRO_0000051606" description="Carbohydrate deacetylase">
    <location>
        <begin position="1"/>
        <end position="252"/>
    </location>
</feature>
<feature type="binding site" evidence="1">
    <location>
        <position position="59"/>
    </location>
    <ligand>
        <name>Mg(2+)</name>
        <dbReference type="ChEBI" id="CHEBI:18420"/>
    </ligand>
</feature>
<feature type="binding site" evidence="1">
    <location>
        <position position="122"/>
    </location>
    <ligand>
        <name>Mg(2+)</name>
        <dbReference type="ChEBI" id="CHEBI:18420"/>
    </ligand>
</feature>
<comment type="function">
    <text evidence="1">Probably catalyzes the deacetylation of acetylated carbohydrates an important step in the degradation of oligosaccharides.</text>
</comment>
<comment type="cofactor">
    <cofactor evidence="1">
        <name>Mg(2+)</name>
        <dbReference type="ChEBI" id="CHEBI:18420"/>
    </cofactor>
</comment>
<comment type="subunit">
    <text evidence="1">Homodimer.</text>
</comment>
<comment type="similarity">
    <text evidence="1">Belongs to the YdjC deacetylase family.</text>
</comment>
<comment type="sequence caution" evidence="2">
    <conflict type="erroneous initiation">
        <sequence resource="EMBL-CDS" id="BAC95661"/>
    </conflict>
    <text>Extended N-terminus.</text>
</comment>
<keyword id="KW-0119">Carbohydrate metabolism</keyword>
<keyword id="KW-0378">Hydrolase</keyword>
<keyword id="KW-0460">Magnesium</keyword>
<keyword id="KW-0479">Metal-binding</keyword>
<organism>
    <name type="scientific">Vibrio vulnificus (strain YJ016)</name>
    <dbReference type="NCBI Taxonomy" id="196600"/>
    <lineage>
        <taxon>Bacteria</taxon>
        <taxon>Pseudomonadati</taxon>
        <taxon>Pseudomonadota</taxon>
        <taxon>Gammaproteobacteria</taxon>
        <taxon>Vibrionales</taxon>
        <taxon>Vibrionaceae</taxon>
        <taxon>Vibrio</taxon>
    </lineage>
</organism>